<organism>
    <name type="scientific">Campylobacter jejuni subsp. jejuni serotype O:2 (strain ATCC 700819 / NCTC 11168)</name>
    <dbReference type="NCBI Taxonomy" id="192222"/>
    <lineage>
        <taxon>Bacteria</taxon>
        <taxon>Pseudomonadati</taxon>
        <taxon>Campylobacterota</taxon>
        <taxon>Epsilonproteobacteria</taxon>
        <taxon>Campylobacterales</taxon>
        <taxon>Campylobacteraceae</taxon>
        <taxon>Campylobacter</taxon>
    </lineage>
</organism>
<comment type="function">
    <text evidence="1">Binds directly to 16S ribosomal RNA.</text>
</comment>
<comment type="similarity">
    <text evidence="1">Belongs to the bacterial ribosomal protein bS20 family.</text>
</comment>
<reference key="1">
    <citation type="journal article" date="2000" name="Nature">
        <title>The genome sequence of the food-borne pathogen Campylobacter jejuni reveals hypervariable sequences.</title>
        <authorList>
            <person name="Parkhill J."/>
            <person name="Wren B.W."/>
            <person name="Mungall K.L."/>
            <person name="Ketley J.M."/>
            <person name="Churcher C.M."/>
            <person name="Basham D."/>
            <person name="Chillingworth T."/>
            <person name="Davies R.M."/>
            <person name="Feltwell T."/>
            <person name="Holroyd S."/>
            <person name="Jagels K."/>
            <person name="Karlyshev A.V."/>
            <person name="Moule S."/>
            <person name="Pallen M.J."/>
            <person name="Penn C.W."/>
            <person name="Quail M.A."/>
            <person name="Rajandream M.A."/>
            <person name="Rutherford K.M."/>
            <person name="van Vliet A.H.M."/>
            <person name="Whitehead S."/>
            <person name="Barrell B.G."/>
        </authorList>
    </citation>
    <scope>NUCLEOTIDE SEQUENCE [LARGE SCALE GENOMIC DNA]</scope>
    <source>
        <strain>ATCC 700819 / NCTC 11168</strain>
    </source>
</reference>
<accession>Q9PM64</accession>
<accession>Q0P817</accession>
<proteinExistence type="inferred from homology"/>
<keyword id="KW-1185">Reference proteome</keyword>
<keyword id="KW-0687">Ribonucleoprotein</keyword>
<keyword id="KW-0689">Ribosomal protein</keyword>
<keyword id="KW-0694">RNA-binding</keyword>
<keyword id="KW-0699">rRNA-binding</keyword>
<dbReference type="EMBL" id="AL111168">
    <property type="protein sequence ID" value="CAL35708.1"/>
    <property type="molecule type" value="Genomic_DNA"/>
</dbReference>
<dbReference type="PIR" id="A81257">
    <property type="entry name" value="A81257"/>
</dbReference>
<dbReference type="RefSeq" id="WP_002851317.1">
    <property type="nucleotide sequence ID" value="NZ_SZUC01000002.1"/>
</dbReference>
<dbReference type="RefSeq" id="YP_002344980.1">
    <property type="nucleotide sequence ID" value="NC_002163.1"/>
</dbReference>
<dbReference type="SMR" id="Q9PM64"/>
<dbReference type="IntAct" id="Q9PM64">
    <property type="interactions" value="9"/>
</dbReference>
<dbReference type="STRING" id="192222.Cj1611"/>
<dbReference type="PaxDb" id="192222-Cj1611"/>
<dbReference type="EnsemblBacteria" id="CAL35708">
    <property type="protein sequence ID" value="CAL35708"/>
    <property type="gene ID" value="Cj1611"/>
</dbReference>
<dbReference type="GeneID" id="905878"/>
<dbReference type="KEGG" id="cje:Cj1611"/>
<dbReference type="PATRIC" id="fig|192222.6.peg.1587"/>
<dbReference type="eggNOG" id="COG0268">
    <property type="taxonomic scope" value="Bacteria"/>
</dbReference>
<dbReference type="HOGENOM" id="CLU_160655_3_0_7"/>
<dbReference type="OrthoDB" id="9807974at2"/>
<dbReference type="Proteomes" id="UP000000799">
    <property type="component" value="Chromosome"/>
</dbReference>
<dbReference type="GO" id="GO:0005829">
    <property type="term" value="C:cytosol"/>
    <property type="evidence" value="ECO:0007669"/>
    <property type="project" value="TreeGrafter"/>
</dbReference>
<dbReference type="GO" id="GO:0015935">
    <property type="term" value="C:small ribosomal subunit"/>
    <property type="evidence" value="ECO:0007669"/>
    <property type="project" value="TreeGrafter"/>
</dbReference>
<dbReference type="GO" id="GO:0070181">
    <property type="term" value="F:small ribosomal subunit rRNA binding"/>
    <property type="evidence" value="ECO:0007669"/>
    <property type="project" value="TreeGrafter"/>
</dbReference>
<dbReference type="GO" id="GO:0003735">
    <property type="term" value="F:structural constituent of ribosome"/>
    <property type="evidence" value="ECO:0007669"/>
    <property type="project" value="InterPro"/>
</dbReference>
<dbReference type="GO" id="GO:0006412">
    <property type="term" value="P:translation"/>
    <property type="evidence" value="ECO:0007669"/>
    <property type="project" value="UniProtKB-UniRule"/>
</dbReference>
<dbReference type="Gene3D" id="1.20.58.110">
    <property type="entry name" value="Ribosomal protein S20"/>
    <property type="match status" value="1"/>
</dbReference>
<dbReference type="HAMAP" id="MF_00500">
    <property type="entry name" value="Ribosomal_bS20"/>
    <property type="match status" value="1"/>
</dbReference>
<dbReference type="InterPro" id="IPR002583">
    <property type="entry name" value="Ribosomal_bS20"/>
</dbReference>
<dbReference type="InterPro" id="IPR036510">
    <property type="entry name" value="Ribosomal_bS20_sf"/>
</dbReference>
<dbReference type="NCBIfam" id="TIGR00029">
    <property type="entry name" value="S20"/>
    <property type="match status" value="1"/>
</dbReference>
<dbReference type="PANTHER" id="PTHR33398">
    <property type="entry name" value="30S RIBOSOMAL PROTEIN S20"/>
    <property type="match status" value="1"/>
</dbReference>
<dbReference type="PANTHER" id="PTHR33398:SF1">
    <property type="entry name" value="SMALL RIBOSOMAL SUBUNIT PROTEIN BS20C"/>
    <property type="match status" value="1"/>
</dbReference>
<dbReference type="Pfam" id="PF01649">
    <property type="entry name" value="Ribosomal_S20p"/>
    <property type="match status" value="1"/>
</dbReference>
<dbReference type="SUPFAM" id="SSF46992">
    <property type="entry name" value="Ribosomal protein S20"/>
    <property type="match status" value="1"/>
</dbReference>
<protein>
    <recommendedName>
        <fullName evidence="1">Small ribosomal subunit protein bS20</fullName>
    </recommendedName>
    <alternativeName>
        <fullName evidence="3">30S ribosomal protein S20</fullName>
    </alternativeName>
</protein>
<feature type="chain" id="PRO_0000167939" description="Small ribosomal subunit protein bS20">
    <location>
        <begin position="1"/>
        <end position="87"/>
    </location>
</feature>
<feature type="region of interest" description="Disordered" evidence="2">
    <location>
        <begin position="1"/>
        <end position="20"/>
    </location>
</feature>
<sequence length="87" mass="9816">MANHKSAEKRARQTIKKTERNRFYRTRLKNITKAVREAAANGNKNAANEALKVANKSIHAMVSRGFIKKQTASRRVSRLALLVNKIA</sequence>
<name>RS20_CAMJE</name>
<evidence type="ECO:0000255" key="1">
    <source>
        <dbReference type="HAMAP-Rule" id="MF_00500"/>
    </source>
</evidence>
<evidence type="ECO:0000256" key="2">
    <source>
        <dbReference type="SAM" id="MobiDB-lite"/>
    </source>
</evidence>
<evidence type="ECO:0000305" key="3"/>
<gene>
    <name evidence="1" type="primary">rpsT</name>
    <name type="ordered locus">Cj1611</name>
</gene>